<reference key="1">
    <citation type="journal article" date="2008" name="PLoS ONE">
        <title>A recalibrated molecular clock and independent origins for the cholera pandemic clones.</title>
        <authorList>
            <person name="Feng L."/>
            <person name="Reeves P.R."/>
            <person name="Lan R."/>
            <person name="Ren Y."/>
            <person name="Gao C."/>
            <person name="Zhou Z."/>
            <person name="Ren Y."/>
            <person name="Cheng J."/>
            <person name="Wang W."/>
            <person name="Wang J."/>
            <person name="Qian W."/>
            <person name="Li D."/>
            <person name="Wang L."/>
        </authorList>
    </citation>
    <scope>NUCLEOTIDE SEQUENCE [LARGE SCALE GENOMIC DNA]</scope>
    <source>
        <strain>M66-2</strain>
    </source>
</reference>
<gene>
    <name evidence="1" type="primary">hflD</name>
    <name type="ordered locus">VCM66_1083</name>
</gene>
<proteinExistence type="inferred from homology"/>
<sequence>MANAIYDRTIAFAGICQAVALVQQVAKNGYCDSDAFETSLKAITCTNPSNTLEVFGHESQLKLGLECLVKGIDSTPSGSEITRYLISLMALERKLSGRRDAMSQLGDRIQMIERQLDHFDLFDDQMISNLASIYLDVISPIGPRIQVTGTPAVLQQTANQHKVRALLLSGIRCAVLWRQVGGRRRHLIFGRKKMIEQAQILLARI</sequence>
<evidence type="ECO:0000255" key="1">
    <source>
        <dbReference type="HAMAP-Rule" id="MF_00695"/>
    </source>
</evidence>
<dbReference type="EMBL" id="CP001233">
    <property type="protein sequence ID" value="ACP05400.1"/>
    <property type="molecule type" value="Genomic_DNA"/>
</dbReference>
<dbReference type="RefSeq" id="WP_001262240.1">
    <property type="nucleotide sequence ID" value="NC_012578.1"/>
</dbReference>
<dbReference type="SMR" id="C3LU24"/>
<dbReference type="GeneID" id="69720182"/>
<dbReference type="KEGG" id="vcm:VCM66_1083"/>
<dbReference type="HOGENOM" id="CLU_098920_0_0_6"/>
<dbReference type="Proteomes" id="UP000001217">
    <property type="component" value="Chromosome I"/>
</dbReference>
<dbReference type="GO" id="GO:0005737">
    <property type="term" value="C:cytoplasm"/>
    <property type="evidence" value="ECO:0007669"/>
    <property type="project" value="UniProtKB-SubCell"/>
</dbReference>
<dbReference type="GO" id="GO:0005886">
    <property type="term" value="C:plasma membrane"/>
    <property type="evidence" value="ECO:0007669"/>
    <property type="project" value="UniProtKB-SubCell"/>
</dbReference>
<dbReference type="FunFam" id="1.10.3890.10:FF:000001">
    <property type="entry name" value="High frequency lysogenization protein HflD homolog"/>
    <property type="match status" value="1"/>
</dbReference>
<dbReference type="Gene3D" id="1.10.3890.10">
    <property type="entry name" value="HflD-like"/>
    <property type="match status" value="1"/>
</dbReference>
<dbReference type="HAMAP" id="MF_00695">
    <property type="entry name" value="HflD_protein"/>
    <property type="match status" value="1"/>
</dbReference>
<dbReference type="InterPro" id="IPR007451">
    <property type="entry name" value="HflD"/>
</dbReference>
<dbReference type="InterPro" id="IPR035932">
    <property type="entry name" value="HflD-like_sf"/>
</dbReference>
<dbReference type="NCBIfam" id="NF001246">
    <property type="entry name" value="PRK00218.1-2"/>
    <property type="match status" value="1"/>
</dbReference>
<dbReference type="NCBIfam" id="NF001248">
    <property type="entry name" value="PRK00218.1-4"/>
    <property type="match status" value="1"/>
</dbReference>
<dbReference type="PANTHER" id="PTHR38100">
    <property type="entry name" value="HIGH FREQUENCY LYSOGENIZATION PROTEIN HFLD"/>
    <property type="match status" value="1"/>
</dbReference>
<dbReference type="PANTHER" id="PTHR38100:SF1">
    <property type="entry name" value="HIGH FREQUENCY LYSOGENIZATION PROTEIN HFLD"/>
    <property type="match status" value="1"/>
</dbReference>
<dbReference type="Pfam" id="PF04356">
    <property type="entry name" value="DUF489"/>
    <property type="match status" value="1"/>
</dbReference>
<dbReference type="SUPFAM" id="SSF101322">
    <property type="entry name" value="YcfC-like"/>
    <property type="match status" value="1"/>
</dbReference>
<accession>C3LU24</accession>
<keyword id="KW-0997">Cell inner membrane</keyword>
<keyword id="KW-1003">Cell membrane</keyword>
<keyword id="KW-0963">Cytoplasm</keyword>
<keyword id="KW-0472">Membrane</keyword>
<protein>
    <recommendedName>
        <fullName evidence="1">High frequency lysogenization protein HflD homolog</fullName>
    </recommendedName>
</protein>
<organism>
    <name type="scientific">Vibrio cholerae serotype O1 (strain M66-2)</name>
    <dbReference type="NCBI Taxonomy" id="579112"/>
    <lineage>
        <taxon>Bacteria</taxon>
        <taxon>Pseudomonadati</taxon>
        <taxon>Pseudomonadota</taxon>
        <taxon>Gammaproteobacteria</taxon>
        <taxon>Vibrionales</taxon>
        <taxon>Vibrionaceae</taxon>
        <taxon>Vibrio</taxon>
    </lineage>
</organism>
<feature type="chain" id="PRO_1000200472" description="High frequency lysogenization protein HflD homolog">
    <location>
        <begin position="1"/>
        <end position="205"/>
    </location>
</feature>
<name>HFLD_VIBCM</name>
<comment type="subcellular location">
    <subcellularLocation>
        <location>Cytoplasm</location>
    </subcellularLocation>
    <subcellularLocation>
        <location evidence="1">Cell inner membrane</location>
        <topology evidence="1">Peripheral membrane protein</topology>
        <orientation evidence="1">Cytoplasmic side</orientation>
    </subcellularLocation>
</comment>
<comment type="similarity">
    <text evidence="1">Belongs to the HflD family.</text>
</comment>